<gene>
    <name type="primary">PRXIIA</name>
    <name type="ordered locus">At1g65990</name>
    <name type="ORF">F12P19.16</name>
</gene>
<reference key="1">
    <citation type="journal article" date="2000" name="Nature">
        <title>Sequence and analysis of chromosome 1 of the plant Arabidopsis thaliana.</title>
        <authorList>
            <person name="Theologis A."/>
            <person name="Ecker J.R."/>
            <person name="Palm C.J."/>
            <person name="Federspiel N.A."/>
            <person name="Kaul S."/>
            <person name="White O."/>
            <person name="Alonso J."/>
            <person name="Altafi H."/>
            <person name="Araujo R."/>
            <person name="Bowman C.L."/>
            <person name="Brooks S.Y."/>
            <person name="Buehler E."/>
            <person name="Chan A."/>
            <person name="Chao Q."/>
            <person name="Chen H."/>
            <person name="Cheuk R.F."/>
            <person name="Chin C.W."/>
            <person name="Chung M.K."/>
            <person name="Conn L."/>
            <person name="Conway A.B."/>
            <person name="Conway A.R."/>
            <person name="Creasy T.H."/>
            <person name="Dewar K."/>
            <person name="Dunn P."/>
            <person name="Etgu P."/>
            <person name="Feldblyum T.V."/>
            <person name="Feng J.-D."/>
            <person name="Fong B."/>
            <person name="Fujii C.Y."/>
            <person name="Gill J.E."/>
            <person name="Goldsmith A.D."/>
            <person name="Haas B."/>
            <person name="Hansen N.F."/>
            <person name="Hughes B."/>
            <person name="Huizar L."/>
            <person name="Hunter J.L."/>
            <person name="Jenkins J."/>
            <person name="Johnson-Hopson C."/>
            <person name="Khan S."/>
            <person name="Khaykin E."/>
            <person name="Kim C.J."/>
            <person name="Koo H.L."/>
            <person name="Kremenetskaia I."/>
            <person name="Kurtz D.B."/>
            <person name="Kwan A."/>
            <person name="Lam B."/>
            <person name="Langin-Hooper S."/>
            <person name="Lee A."/>
            <person name="Lee J.M."/>
            <person name="Lenz C.A."/>
            <person name="Li J.H."/>
            <person name="Li Y.-P."/>
            <person name="Lin X."/>
            <person name="Liu S.X."/>
            <person name="Liu Z.A."/>
            <person name="Luros J.S."/>
            <person name="Maiti R."/>
            <person name="Marziali A."/>
            <person name="Militscher J."/>
            <person name="Miranda M."/>
            <person name="Nguyen M."/>
            <person name="Nierman W.C."/>
            <person name="Osborne B.I."/>
            <person name="Pai G."/>
            <person name="Peterson J."/>
            <person name="Pham P.K."/>
            <person name="Rizzo M."/>
            <person name="Rooney T."/>
            <person name="Rowley D."/>
            <person name="Sakano H."/>
            <person name="Salzberg S.L."/>
            <person name="Schwartz J.R."/>
            <person name="Shinn P."/>
            <person name="Southwick A.M."/>
            <person name="Sun H."/>
            <person name="Tallon L.J."/>
            <person name="Tambunga G."/>
            <person name="Toriumi M.J."/>
            <person name="Town C.D."/>
            <person name="Utterback T."/>
            <person name="Van Aken S."/>
            <person name="Vaysberg M."/>
            <person name="Vysotskaia V.S."/>
            <person name="Walker M."/>
            <person name="Wu D."/>
            <person name="Yu G."/>
            <person name="Fraser C.M."/>
            <person name="Venter J.C."/>
            <person name="Davis R.W."/>
        </authorList>
    </citation>
    <scope>NUCLEOTIDE SEQUENCE [LARGE SCALE GENOMIC DNA]</scope>
    <source>
        <strain>cv. Columbia</strain>
    </source>
</reference>
<reference key="2">
    <citation type="journal article" date="2017" name="Plant J.">
        <title>Araport11: a complete reannotation of the Arabidopsis thaliana reference genome.</title>
        <authorList>
            <person name="Cheng C.Y."/>
            <person name="Krishnakumar V."/>
            <person name="Chan A.P."/>
            <person name="Thibaud-Nissen F."/>
            <person name="Schobel S."/>
            <person name="Town C.D."/>
        </authorList>
    </citation>
    <scope>GENOME REANNOTATION</scope>
    <source>
        <strain>cv. Columbia</strain>
    </source>
</reference>
<reference key="3">
    <citation type="submission" date="2005-05" db="EMBL/GenBank/DDBJ databases">
        <authorList>
            <person name="Underwood B.A."/>
            <person name="Xiao Y.-L."/>
            <person name="Moskal W.A. Jr."/>
            <person name="Monaghan E.L."/>
            <person name="Wang W."/>
            <person name="Redman J.C."/>
            <person name="Wu H.C."/>
            <person name="Utterback T."/>
            <person name="Town C.D."/>
        </authorList>
    </citation>
    <scope>NUCLEOTIDE SEQUENCE [LARGE SCALE MRNA]</scope>
    <source>
        <strain>cv. Columbia</strain>
    </source>
</reference>
<reference key="4">
    <citation type="journal article" date="2005" name="Free Radic. Biol. Med.">
        <title>The plant multigenic family of thiol peroxidases.</title>
        <authorList>
            <person name="Rouhier N."/>
            <person name="Jacquot J.-P."/>
        </authorList>
    </citation>
    <scope>GENE FAMILY ORGANIZATION</scope>
    <scope>NOMENCLATURE</scope>
</reference>
<name>PRX2A_ARATH</name>
<accession>Q7G959</accession>
<protein>
    <recommendedName>
        <fullName>Peroxiredoxin-2A</fullName>
        <ecNumber evidence="1">1.11.1.25</ecNumber>
    </recommendedName>
    <alternativeName>
        <fullName evidence="4">Glutaredoxin-dependent peroxiredoxin</fullName>
    </alternativeName>
    <alternativeName>
        <fullName>Peroxiredoxin IIA</fullName>
    </alternativeName>
    <alternativeName>
        <fullName>Thioredoxin peroxidase 2A</fullName>
    </alternativeName>
</protein>
<evidence type="ECO:0000250" key="1">
    <source>
        <dbReference type="UniProtKB" id="A9PCL4"/>
    </source>
</evidence>
<evidence type="ECO:0000255" key="2">
    <source>
        <dbReference type="PROSITE-ProRule" id="PRU00080"/>
    </source>
</evidence>
<evidence type="ECO:0000255" key="3">
    <source>
        <dbReference type="PROSITE-ProRule" id="PRU00691"/>
    </source>
</evidence>
<evidence type="ECO:0000305" key="4"/>
<evidence type="ECO:0000305" key="5">
    <source>
    </source>
</evidence>
<sequence>MAPIDVGDFVPDGSISFFDDDDQLQTVSVHSLAAGKKVILFGVPGAFPPTCSMNHVNGFIEKAEELKSNGVDEIICLSGDDPFMITACSENKHVKFVEDGSGEYIQLLGLELEVKDKGLGVRSRGFALLLDNLKVIVVNVGSGGDCSLFQLMKMTTTTMSNLPTDLLEEIISRVPRKYMRAVRLTCKRWNGMFKSQSFTKMHIGKEEAATRELRQTRMIVMMDYNVYLMGIAVNEIPSIETLGKLTCLDDSEQVKISQVFCCEGLLLCILKDDDTKIVVWNPYLGQTRWIQTRLICCVSGWKKYALGYGNNSENRSCRSPKILRVTDNFNIFSENIPLQYEIYDFDSDVWTTLDVSPHWFIMSERGLSLKGNTYWGAKERHAYGSIDHIICFDFTRERFGPLLPLPFSAWGAQFASLSSVREDKITALFQNCRAYKLELWITTKIDVNNATWSKFFTMDTPYLHEILSLKTFFIDEENKIVVVSNKERDTKGDLTHDSIDIINGEARCLWKLGLGKPADKNCWPLVCPYVPSVVQIKQHKGGKTKEQSDYKRH</sequence>
<proteinExistence type="evidence at transcript level"/>
<feature type="chain" id="PRO_0000282278" description="Peroxiredoxin-2A">
    <location>
        <begin position="1"/>
        <end position="553"/>
    </location>
</feature>
<feature type="domain" description="Thioredoxin" evidence="3">
    <location>
        <begin position="4"/>
        <end position="160"/>
    </location>
</feature>
<feature type="domain" description="F-box" evidence="2">
    <location>
        <begin position="156"/>
        <end position="201"/>
    </location>
</feature>
<feature type="active site" description="Cysteine sulfenic acid (-SOH) intermediate" evidence="1">
    <location>
        <position position="51"/>
    </location>
</feature>
<keyword id="KW-0049">Antioxidant</keyword>
<keyword id="KW-0560">Oxidoreductase</keyword>
<keyword id="KW-0575">Peroxidase</keyword>
<keyword id="KW-0676">Redox-active center</keyword>
<keyword id="KW-1185">Reference proteome</keyword>
<keyword id="KW-0833">Ubl conjugation pathway</keyword>
<organism>
    <name type="scientific">Arabidopsis thaliana</name>
    <name type="common">Mouse-ear cress</name>
    <dbReference type="NCBI Taxonomy" id="3702"/>
    <lineage>
        <taxon>Eukaryota</taxon>
        <taxon>Viridiplantae</taxon>
        <taxon>Streptophyta</taxon>
        <taxon>Embryophyta</taxon>
        <taxon>Tracheophyta</taxon>
        <taxon>Spermatophyta</taxon>
        <taxon>Magnoliopsida</taxon>
        <taxon>eudicotyledons</taxon>
        <taxon>Gunneridae</taxon>
        <taxon>Pentapetalae</taxon>
        <taxon>rosids</taxon>
        <taxon>malvids</taxon>
        <taxon>Brassicales</taxon>
        <taxon>Brassicaceae</taxon>
        <taxon>Camelineae</taxon>
        <taxon>Arabidopsis</taxon>
    </lineage>
</organism>
<comment type="function">
    <text evidence="1 5">Thiol-specific peroxidase that catalyzes the reduction of hydrogen peroxide and organic hydroperoxides to water and alcohols, respectively. Plays a role in cell protection against oxidative stress by detoxifying peroxides (By similarity). May be involved in intracellular redox signaling (Probable).</text>
</comment>
<comment type="catalytic activity">
    <reaction evidence="1">
        <text>[glutaredoxin]-dithiol + a hydroperoxide = [glutaredoxin]-disulfide + an alcohol + H2O</text>
        <dbReference type="Rhea" id="RHEA:62624"/>
        <dbReference type="Rhea" id="RHEA-COMP:10729"/>
        <dbReference type="Rhea" id="RHEA-COMP:10730"/>
        <dbReference type="ChEBI" id="CHEBI:15377"/>
        <dbReference type="ChEBI" id="CHEBI:29950"/>
        <dbReference type="ChEBI" id="CHEBI:30879"/>
        <dbReference type="ChEBI" id="CHEBI:35924"/>
        <dbReference type="ChEBI" id="CHEBI:50058"/>
        <dbReference type="EC" id="1.11.1.25"/>
    </reaction>
</comment>
<comment type="subunit">
    <text evidence="1">Monomer.</text>
</comment>
<comment type="miscellaneous">
    <text evidence="1">The active site is a conserved redox-active cysteine residue, the peroxidatic cysteine (C(P)), which makes the nucleophilic attack on the peroxide substrate. The peroxide oxidizes the C(P)-SH to cysteine sulfenic acid (C(P)-SOH), which then reacts with another cysteine residue, the resolving cysteine (C(R)), to form a disulfide bridge. The disulfide is subsequently reduced by an appropriate electron donor to complete the catalytic cycle. In this 1-Cys peroxiredoxin, no C(R) is present and C(P) instead forms a disulfide with a cysteine from another protein or with a small thiol molecule. C(P) is reactivated by glutathionylation and subsequent reduction by glutaredoxin (Grx), or by thioredoxin (Trx).</text>
</comment>
<comment type="similarity">
    <text evidence="4">Belongs to the peroxiredoxin family. Prx5 subfamily.</text>
</comment>
<dbReference type="EC" id="1.11.1.25" evidence="1"/>
<dbReference type="EMBL" id="AC009513">
    <property type="protein sequence ID" value="AAF06060.1"/>
    <property type="molecule type" value="Genomic_DNA"/>
</dbReference>
<dbReference type="EMBL" id="CP002684">
    <property type="protein sequence ID" value="AEE34450.1"/>
    <property type="molecule type" value="Genomic_DNA"/>
</dbReference>
<dbReference type="EMBL" id="DQ056510">
    <property type="protein sequence ID" value="AAY78667.1"/>
    <property type="molecule type" value="mRNA"/>
</dbReference>
<dbReference type="PIR" id="D96684">
    <property type="entry name" value="D96684"/>
</dbReference>
<dbReference type="RefSeq" id="NP_176774.1">
    <property type="nucleotide sequence ID" value="NM_105271.1"/>
</dbReference>
<dbReference type="SMR" id="Q7G959"/>
<dbReference type="STRING" id="3702.Q7G959"/>
<dbReference type="PeroxiBase" id="4352">
    <property type="entry name" value="AtPrxII01"/>
</dbReference>
<dbReference type="iPTMnet" id="Q7G959"/>
<dbReference type="PaxDb" id="3702-AT1G65990.1"/>
<dbReference type="EnsemblPlants" id="AT1G65990.1">
    <property type="protein sequence ID" value="AT1G65990.1"/>
    <property type="gene ID" value="AT1G65990"/>
</dbReference>
<dbReference type="GeneID" id="842912"/>
<dbReference type="Gramene" id="AT1G65990.1">
    <property type="protein sequence ID" value="AT1G65990.1"/>
    <property type="gene ID" value="AT1G65990"/>
</dbReference>
<dbReference type="KEGG" id="ath:AT1G65990"/>
<dbReference type="Araport" id="AT1G65990"/>
<dbReference type="TAIR" id="AT1G65990"/>
<dbReference type="eggNOG" id="KOG0541">
    <property type="taxonomic scope" value="Eukaryota"/>
</dbReference>
<dbReference type="HOGENOM" id="CLU_034692_0_0_1"/>
<dbReference type="InParanoid" id="Q7G959"/>
<dbReference type="OMA" id="VERNEYA"/>
<dbReference type="PhylomeDB" id="Q7G959"/>
<dbReference type="BioCyc" id="ARA:AT1G65990-MONOMER"/>
<dbReference type="PRO" id="PR:Q7G959"/>
<dbReference type="Proteomes" id="UP000006548">
    <property type="component" value="Chromosome 1"/>
</dbReference>
<dbReference type="ExpressionAtlas" id="Q7G959">
    <property type="expression patterns" value="baseline and differential"/>
</dbReference>
<dbReference type="GO" id="GO:0008379">
    <property type="term" value="F:thioredoxin peroxidase activity"/>
    <property type="evidence" value="ECO:0007669"/>
    <property type="project" value="InterPro"/>
</dbReference>
<dbReference type="GO" id="GO:0034599">
    <property type="term" value="P:cellular response to oxidative stress"/>
    <property type="evidence" value="ECO:0007669"/>
    <property type="project" value="InterPro"/>
</dbReference>
<dbReference type="CDD" id="cd22157">
    <property type="entry name" value="F-box_AtFBW1-like"/>
    <property type="match status" value="1"/>
</dbReference>
<dbReference type="CDD" id="cd03013">
    <property type="entry name" value="PRX5_like"/>
    <property type="match status" value="1"/>
</dbReference>
<dbReference type="FunFam" id="1.20.1280.50:FF:000154">
    <property type="entry name" value="Putative F-box protein At5g36200"/>
    <property type="match status" value="1"/>
</dbReference>
<dbReference type="FunFam" id="3.40.30.10:FF:000671">
    <property type="entry name" value="Pyruvate decarboxylase 2"/>
    <property type="match status" value="1"/>
</dbReference>
<dbReference type="Gene3D" id="1.20.1280.50">
    <property type="match status" value="1"/>
</dbReference>
<dbReference type="Gene3D" id="3.40.30.10">
    <property type="entry name" value="Glutaredoxin"/>
    <property type="match status" value="1"/>
</dbReference>
<dbReference type="InterPro" id="IPR006527">
    <property type="entry name" value="F-box-assoc_dom_typ1"/>
</dbReference>
<dbReference type="InterPro" id="IPR017451">
    <property type="entry name" value="F-box-assoc_interact_dom"/>
</dbReference>
<dbReference type="InterPro" id="IPR036047">
    <property type="entry name" value="F-box-like_dom_sf"/>
</dbReference>
<dbReference type="InterPro" id="IPR001810">
    <property type="entry name" value="F-box_dom"/>
</dbReference>
<dbReference type="InterPro" id="IPR011043">
    <property type="entry name" value="Gal_Oxase/kelch_b-propeller"/>
</dbReference>
<dbReference type="InterPro" id="IPR037944">
    <property type="entry name" value="PRX5-like"/>
</dbReference>
<dbReference type="InterPro" id="IPR013740">
    <property type="entry name" value="Redoxin"/>
</dbReference>
<dbReference type="InterPro" id="IPR036249">
    <property type="entry name" value="Thioredoxin-like_sf"/>
</dbReference>
<dbReference type="NCBIfam" id="TIGR01640">
    <property type="entry name" value="F_box_assoc_1"/>
    <property type="match status" value="1"/>
</dbReference>
<dbReference type="PANTHER" id="PTHR10430">
    <property type="entry name" value="PEROXIREDOXIN"/>
    <property type="match status" value="1"/>
</dbReference>
<dbReference type="PANTHER" id="PTHR10430:SF8">
    <property type="entry name" value="PEROXIREDOXIN-2A-RELATED"/>
    <property type="match status" value="1"/>
</dbReference>
<dbReference type="Pfam" id="PF00646">
    <property type="entry name" value="F-box"/>
    <property type="match status" value="1"/>
</dbReference>
<dbReference type="Pfam" id="PF07734">
    <property type="entry name" value="FBA_1"/>
    <property type="match status" value="1"/>
</dbReference>
<dbReference type="Pfam" id="PF08534">
    <property type="entry name" value="Redoxin"/>
    <property type="match status" value="1"/>
</dbReference>
<dbReference type="SMART" id="SM00256">
    <property type="entry name" value="FBOX"/>
    <property type="match status" value="1"/>
</dbReference>
<dbReference type="SUPFAM" id="SSF81383">
    <property type="entry name" value="F-box domain"/>
    <property type="match status" value="1"/>
</dbReference>
<dbReference type="SUPFAM" id="SSF50965">
    <property type="entry name" value="Galactose oxidase, central domain"/>
    <property type="match status" value="1"/>
</dbReference>
<dbReference type="SUPFAM" id="SSF52833">
    <property type="entry name" value="Thioredoxin-like"/>
    <property type="match status" value="1"/>
</dbReference>
<dbReference type="PROSITE" id="PS50181">
    <property type="entry name" value="FBOX"/>
    <property type="match status" value="1"/>
</dbReference>